<organism>
    <name type="scientific">Enterobacteria phage 434</name>
    <name type="common">Bacteriophage 434</name>
    <dbReference type="NCBI Taxonomy" id="10712"/>
    <lineage>
        <taxon>Viruses</taxon>
        <taxon>Duplodnaviria</taxon>
        <taxon>Heunggongvirae</taxon>
        <taxon>Uroviricota</taxon>
        <taxon>Caudoviricetes</taxon>
        <taxon>Lambdavirus</taxon>
        <taxon>Lambdavirus lambda</taxon>
    </lineage>
</organism>
<accession>P27078</accession>
<feature type="chain" id="PRO_0000197526" description="Integrase">
    <location>
        <begin position="1"/>
        <end position="356"/>
    </location>
</feature>
<feature type="domain" description="Core-binding (CB)" evidence="3">
    <location>
        <begin position="74"/>
        <end position="155"/>
    </location>
</feature>
<feature type="domain" description="Tyr recombinase" evidence="2">
    <location>
        <begin position="175"/>
        <end position="355"/>
    </location>
</feature>
<feature type="active site" evidence="2">
    <location>
        <position position="212"/>
    </location>
</feature>
<feature type="active site" evidence="2">
    <location>
        <position position="235"/>
    </location>
</feature>
<feature type="active site" evidence="2">
    <location>
        <position position="308"/>
    </location>
</feature>
<feature type="active site" evidence="2">
    <location>
        <position position="311"/>
    </location>
</feature>
<feature type="active site" evidence="2">
    <location>
        <position position="333"/>
    </location>
</feature>
<feature type="active site" description="O-(3'-phospho-DNA)-tyrosine intermediate" evidence="2">
    <location>
        <position position="342"/>
    </location>
</feature>
<gene>
    <name type="primary">int</name>
</gene>
<keyword id="KW-0229">DNA integration</keyword>
<keyword id="KW-0233">DNA recombination</keyword>
<keyword id="KW-0238">DNA-binding</keyword>
<keyword id="KW-0378">Hydrolase</keyword>
<keyword id="KW-0808">Transferase</keyword>
<keyword id="KW-1179">Viral genome integration</keyword>
<keyword id="KW-1160">Virus entry into host cell</keyword>
<sequence length="356" mass="40253">MGRRRSHERRDLPPNLYIRNNGYYCYRDPRTGKEFGLGRDRRIAITEAIQANIELFSGHKHKPLTARINSDNSVTLHSWLDRYEKILASRGIKQKTLINYMSKIKAIRRGLPDAPLEDITTKEIAAMLSGYIDEGKAASAKLIRSTLSDAFREAIAEGHITTNPVAATRAAKSEVRRSRLTADEYLKIYQAAESSPCWLRLAMELAVVTGQRVGDLCEMKWSDIVDGYLYVEQSKTGVKIAIPTTLHVDALGISMKETLDKCKEILGGETIIASTRREPLSSGTVSRYFMRARKASGLSFEGDPPTFHELRSLSARLYEKQISDKFAQHLLGHKSDTMASQYRDDRGREWDKIEIK</sequence>
<evidence type="ECO:0000250" key="1">
    <source>
        <dbReference type="UniProtKB" id="P03700"/>
    </source>
</evidence>
<evidence type="ECO:0000255" key="2">
    <source>
        <dbReference type="PROSITE-ProRule" id="PRU01246"/>
    </source>
</evidence>
<evidence type="ECO:0000255" key="3">
    <source>
        <dbReference type="PROSITE-ProRule" id="PRU01248"/>
    </source>
</evidence>
<evidence type="ECO:0000305" key="4"/>
<comment type="function">
    <text>Integrase is necessary for integration of the phage into the host genome by site-specific recombination. In conjunction with excisionase, integrase is also necessary for excision of the prophage from the host genome.</text>
</comment>
<comment type="miscellaneous">
    <text>Bacteriophage 434 is a lysogenic phage that shares extensive DNA homology with bacteriophage lambda. It inserts its DNA into the E.coli chromosome at or near the lambda insertion site. Complementation of integration functions between the two phages has been demonstrated.</text>
</comment>
<comment type="similarity">
    <text evidence="4">Belongs to the 'phage' integrase family.</text>
</comment>
<protein>
    <recommendedName>
        <fullName>Integrase</fullName>
        <ecNumber evidence="1">2.7.7.-</ecNumber>
        <ecNumber evidence="1">3.1.-.-</ecNumber>
    </recommendedName>
</protein>
<name>VINT_BP434</name>
<reference key="1">
    <citation type="journal article" date="1991" name="New Biol.">
        <title>Recombination and modular exchange in the genesis of new lambdoid phages.</title>
        <authorList>
            <person name="Baker J."/>
            <person name="Limberger R."/>
            <person name="Schneider S.J."/>
            <person name="Campbell A."/>
        </authorList>
    </citation>
    <scope>NUCLEOTIDE SEQUENCE [GENOMIC DNA]</scope>
</reference>
<reference key="2">
    <citation type="journal article" date="1981" name="Gene">
        <title>DNA sequence of the att region of coliphage 434.</title>
        <authorList>
            <person name="Mascarenhas D."/>
            <person name="Kelley R."/>
            <person name="Campbell A."/>
        </authorList>
    </citation>
    <scope>NUCLEOTIDE SEQUENCE [GENOMIC DNA] OF 303-356</scope>
</reference>
<dbReference type="EC" id="2.7.7.-" evidence="1"/>
<dbReference type="EC" id="3.1.-.-" evidence="1"/>
<dbReference type="EMBL" id="M60848">
    <property type="protein sequence ID" value="AAA67900.1"/>
    <property type="molecule type" value="Genomic_DNA"/>
</dbReference>
<dbReference type="PIR" id="A45584">
    <property type="entry name" value="A45584"/>
</dbReference>
<dbReference type="SMR" id="P27078"/>
<dbReference type="GO" id="GO:0003677">
    <property type="term" value="F:DNA binding"/>
    <property type="evidence" value="ECO:0007669"/>
    <property type="project" value="UniProtKB-KW"/>
</dbReference>
<dbReference type="GO" id="GO:0016787">
    <property type="term" value="F:hydrolase activity"/>
    <property type="evidence" value="ECO:0007669"/>
    <property type="project" value="UniProtKB-KW"/>
</dbReference>
<dbReference type="GO" id="GO:0008907">
    <property type="term" value="F:integrase activity"/>
    <property type="evidence" value="ECO:0007669"/>
    <property type="project" value="InterPro"/>
</dbReference>
<dbReference type="GO" id="GO:0016740">
    <property type="term" value="F:transferase activity"/>
    <property type="evidence" value="ECO:0007669"/>
    <property type="project" value="UniProtKB-KW"/>
</dbReference>
<dbReference type="GO" id="GO:0006310">
    <property type="term" value="P:DNA recombination"/>
    <property type="evidence" value="ECO:0007669"/>
    <property type="project" value="UniProtKB-KW"/>
</dbReference>
<dbReference type="GO" id="GO:0075713">
    <property type="term" value="P:establishment of integrated proviral latency"/>
    <property type="evidence" value="ECO:0007669"/>
    <property type="project" value="UniProtKB-KW"/>
</dbReference>
<dbReference type="GO" id="GO:0046718">
    <property type="term" value="P:symbiont entry into host cell"/>
    <property type="evidence" value="ECO:0007669"/>
    <property type="project" value="UniProtKB-KW"/>
</dbReference>
<dbReference type="GO" id="GO:0044826">
    <property type="term" value="P:viral genome integration into host DNA"/>
    <property type="evidence" value="ECO:0007669"/>
    <property type="project" value="UniProtKB-KW"/>
</dbReference>
<dbReference type="CDD" id="cd00800">
    <property type="entry name" value="INT_Lambda_C"/>
    <property type="match status" value="1"/>
</dbReference>
<dbReference type="FunFam" id="3.30.160.60:FF:001166">
    <property type="entry name" value="Phage integrase"/>
    <property type="match status" value="1"/>
</dbReference>
<dbReference type="Gene3D" id="1.10.150.130">
    <property type="match status" value="1"/>
</dbReference>
<dbReference type="Gene3D" id="3.30.160.60">
    <property type="entry name" value="Classic Zinc Finger"/>
    <property type="match status" value="1"/>
</dbReference>
<dbReference type="Gene3D" id="1.10.443.10">
    <property type="entry name" value="Intergrase catalytic core"/>
    <property type="match status" value="1"/>
</dbReference>
<dbReference type="InterPro" id="IPR044068">
    <property type="entry name" value="CB"/>
</dbReference>
<dbReference type="InterPro" id="IPR016177">
    <property type="entry name" value="DNA-bd_dom_sf"/>
</dbReference>
<dbReference type="InterPro" id="IPR011010">
    <property type="entry name" value="DNA_brk_join_enz"/>
</dbReference>
<dbReference type="InterPro" id="IPR013762">
    <property type="entry name" value="Integrase-like_cat_sf"/>
</dbReference>
<dbReference type="InterPro" id="IPR002104">
    <property type="entry name" value="Integrase_catalytic"/>
</dbReference>
<dbReference type="InterPro" id="IPR015094">
    <property type="entry name" value="Integrase_lambda-typ_DNA-bd_N"/>
</dbReference>
<dbReference type="InterPro" id="IPR010998">
    <property type="entry name" value="Integrase_recombinase_N"/>
</dbReference>
<dbReference type="InterPro" id="IPR053876">
    <property type="entry name" value="Phage_int_M"/>
</dbReference>
<dbReference type="InterPro" id="IPR050808">
    <property type="entry name" value="Phage_Integrase"/>
</dbReference>
<dbReference type="PANTHER" id="PTHR30629">
    <property type="entry name" value="PROPHAGE INTEGRASE"/>
    <property type="match status" value="1"/>
</dbReference>
<dbReference type="PANTHER" id="PTHR30629:SF2">
    <property type="entry name" value="PROPHAGE INTEGRASE INTS-RELATED"/>
    <property type="match status" value="1"/>
</dbReference>
<dbReference type="Pfam" id="PF09003">
    <property type="entry name" value="Arm-DNA-bind_1"/>
    <property type="match status" value="1"/>
</dbReference>
<dbReference type="Pfam" id="PF22022">
    <property type="entry name" value="Phage_int_M"/>
    <property type="match status" value="1"/>
</dbReference>
<dbReference type="Pfam" id="PF00589">
    <property type="entry name" value="Phage_integrase"/>
    <property type="match status" value="1"/>
</dbReference>
<dbReference type="SUPFAM" id="SSF56349">
    <property type="entry name" value="DNA breaking-rejoining enzymes"/>
    <property type="match status" value="1"/>
</dbReference>
<dbReference type="SUPFAM" id="SSF54171">
    <property type="entry name" value="DNA-binding domain"/>
    <property type="match status" value="1"/>
</dbReference>
<dbReference type="PROSITE" id="PS51900">
    <property type="entry name" value="CB"/>
    <property type="match status" value="1"/>
</dbReference>
<dbReference type="PROSITE" id="PS51898">
    <property type="entry name" value="TYR_RECOMBINASE"/>
    <property type="match status" value="1"/>
</dbReference>
<organismHost>
    <name type="scientific">Escherichia coli</name>
    <dbReference type="NCBI Taxonomy" id="562"/>
</organismHost>
<proteinExistence type="inferred from homology"/>